<evidence type="ECO:0000255" key="1">
    <source>
        <dbReference type="HAMAP-Rule" id="MF_00235"/>
    </source>
</evidence>
<name>KAD_STRPM</name>
<organism>
    <name type="scientific">Streptococcus pyogenes serotype M28 (strain MGAS6180)</name>
    <dbReference type="NCBI Taxonomy" id="319701"/>
    <lineage>
        <taxon>Bacteria</taxon>
        <taxon>Bacillati</taxon>
        <taxon>Bacillota</taxon>
        <taxon>Bacilli</taxon>
        <taxon>Lactobacillales</taxon>
        <taxon>Streptococcaceae</taxon>
        <taxon>Streptococcus</taxon>
    </lineage>
</organism>
<accession>Q48VS8</accession>
<comment type="function">
    <text evidence="1">Catalyzes the reversible transfer of the terminal phosphate group between ATP and AMP. Plays an important role in cellular energy homeostasis and in adenine nucleotide metabolism.</text>
</comment>
<comment type="catalytic activity">
    <reaction evidence="1">
        <text>AMP + ATP = 2 ADP</text>
        <dbReference type="Rhea" id="RHEA:12973"/>
        <dbReference type="ChEBI" id="CHEBI:30616"/>
        <dbReference type="ChEBI" id="CHEBI:456215"/>
        <dbReference type="ChEBI" id="CHEBI:456216"/>
        <dbReference type="EC" id="2.7.4.3"/>
    </reaction>
</comment>
<comment type="pathway">
    <text evidence="1">Purine metabolism; AMP biosynthesis via salvage pathway; AMP from ADP: step 1/1.</text>
</comment>
<comment type="subunit">
    <text evidence="1">Monomer.</text>
</comment>
<comment type="subcellular location">
    <subcellularLocation>
        <location evidence="1">Cytoplasm</location>
    </subcellularLocation>
</comment>
<comment type="domain">
    <text evidence="1">Consists of three domains, a large central CORE domain and two small peripheral domains, NMPbind and LID, which undergo movements during catalysis. The LID domain closes over the site of phosphoryl transfer upon ATP binding. Assembling and dissambling the active center during each catalytic cycle provides an effective means to prevent ATP hydrolysis.</text>
</comment>
<comment type="similarity">
    <text evidence="1">Belongs to the adenylate kinase family.</text>
</comment>
<protein>
    <recommendedName>
        <fullName evidence="1">Adenylate kinase</fullName>
        <shortName evidence="1">AK</shortName>
        <ecNumber evidence="1">2.7.4.3</ecNumber>
    </recommendedName>
    <alternativeName>
        <fullName evidence="1">ATP-AMP transphosphorylase</fullName>
    </alternativeName>
    <alternativeName>
        <fullName evidence="1">ATP:AMP phosphotransferase</fullName>
    </alternativeName>
    <alternativeName>
        <fullName evidence="1">Adenylate monophosphate kinase</fullName>
    </alternativeName>
</protein>
<keyword id="KW-0067">ATP-binding</keyword>
<keyword id="KW-0963">Cytoplasm</keyword>
<keyword id="KW-0418">Kinase</keyword>
<keyword id="KW-0545">Nucleotide biosynthesis</keyword>
<keyword id="KW-0547">Nucleotide-binding</keyword>
<keyword id="KW-0808">Transferase</keyword>
<dbReference type="EC" id="2.7.4.3" evidence="1"/>
<dbReference type="EMBL" id="CP000056">
    <property type="protein sequence ID" value="AAX71178.1"/>
    <property type="molecule type" value="Genomic_DNA"/>
</dbReference>
<dbReference type="RefSeq" id="WP_002987754.1">
    <property type="nucleotide sequence ID" value="NC_007296.2"/>
</dbReference>
<dbReference type="SMR" id="Q48VS8"/>
<dbReference type="KEGG" id="spb:M28_Spy0064"/>
<dbReference type="HOGENOM" id="CLU_032354_1_2_9"/>
<dbReference type="UniPathway" id="UPA00588">
    <property type="reaction ID" value="UER00649"/>
</dbReference>
<dbReference type="GO" id="GO:0005737">
    <property type="term" value="C:cytoplasm"/>
    <property type="evidence" value="ECO:0007669"/>
    <property type="project" value="UniProtKB-SubCell"/>
</dbReference>
<dbReference type="GO" id="GO:0004017">
    <property type="term" value="F:adenylate kinase activity"/>
    <property type="evidence" value="ECO:0007669"/>
    <property type="project" value="UniProtKB-UniRule"/>
</dbReference>
<dbReference type="GO" id="GO:0005524">
    <property type="term" value="F:ATP binding"/>
    <property type="evidence" value="ECO:0007669"/>
    <property type="project" value="UniProtKB-UniRule"/>
</dbReference>
<dbReference type="GO" id="GO:0044209">
    <property type="term" value="P:AMP salvage"/>
    <property type="evidence" value="ECO:0007669"/>
    <property type="project" value="UniProtKB-UniRule"/>
</dbReference>
<dbReference type="CDD" id="cd01428">
    <property type="entry name" value="ADK"/>
    <property type="match status" value="1"/>
</dbReference>
<dbReference type="FunFam" id="3.40.50.300:FF:000106">
    <property type="entry name" value="Adenylate kinase mitochondrial"/>
    <property type="match status" value="1"/>
</dbReference>
<dbReference type="Gene3D" id="3.40.50.300">
    <property type="entry name" value="P-loop containing nucleotide triphosphate hydrolases"/>
    <property type="match status" value="1"/>
</dbReference>
<dbReference type="HAMAP" id="MF_00235">
    <property type="entry name" value="Adenylate_kinase_Adk"/>
    <property type="match status" value="1"/>
</dbReference>
<dbReference type="InterPro" id="IPR006259">
    <property type="entry name" value="Adenyl_kin_sub"/>
</dbReference>
<dbReference type="InterPro" id="IPR000850">
    <property type="entry name" value="Adenylat/UMP-CMP_kin"/>
</dbReference>
<dbReference type="InterPro" id="IPR033690">
    <property type="entry name" value="Adenylat_kinase_CS"/>
</dbReference>
<dbReference type="InterPro" id="IPR027417">
    <property type="entry name" value="P-loop_NTPase"/>
</dbReference>
<dbReference type="NCBIfam" id="TIGR01351">
    <property type="entry name" value="adk"/>
    <property type="match status" value="1"/>
</dbReference>
<dbReference type="NCBIfam" id="NF001380">
    <property type="entry name" value="PRK00279.1-2"/>
    <property type="match status" value="1"/>
</dbReference>
<dbReference type="NCBIfam" id="NF001381">
    <property type="entry name" value="PRK00279.1-3"/>
    <property type="match status" value="1"/>
</dbReference>
<dbReference type="NCBIfam" id="NF001382">
    <property type="entry name" value="PRK00279.1-4"/>
    <property type="match status" value="1"/>
</dbReference>
<dbReference type="NCBIfam" id="NF011100">
    <property type="entry name" value="PRK14527.1"/>
    <property type="match status" value="1"/>
</dbReference>
<dbReference type="PANTHER" id="PTHR23359">
    <property type="entry name" value="NUCLEOTIDE KINASE"/>
    <property type="match status" value="1"/>
</dbReference>
<dbReference type="Pfam" id="PF00406">
    <property type="entry name" value="ADK"/>
    <property type="match status" value="1"/>
</dbReference>
<dbReference type="PRINTS" id="PR00094">
    <property type="entry name" value="ADENYLTKNASE"/>
</dbReference>
<dbReference type="SUPFAM" id="SSF52540">
    <property type="entry name" value="P-loop containing nucleoside triphosphate hydrolases"/>
    <property type="match status" value="1"/>
</dbReference>
<dbReference type="PROSITE" id="PS00113">
    <property type="entry name" value="ADENYLATE_KINASE"/>
    <property type="match status" value="1"/>
</dbReference>
<proteinExistence type="inferred from homology"/>
<reference key="1">
    <citation type="journal article" date="2005" name="J. Infect. Dis.">
        <title>Genome sequence of a serotype M28 strain of group A Streptococcus: potential new insights into puerperal sepsis and bacterial disease specificity.</title>
        <authorList>
            <person name="Green N.M."/>
            <person name="Zhang S."/>
            <person name="Porcella S.F."/>
            <person name="Nagiec M.J."/>
            <person name="Barbian K.D."/>
            <person name="Beres S.B."/>
            <person name="Lefebvre R.B."/>
            <person name="Musser J.M."/>
        </authorList>
    </citation>
    <scope>NUCLEOTIDE SEQUENCE [LARGE SCALE GENOMIC DNA]</scope>
    <source>
        <strain>MGAS6180</strain>
    </source>
</reference>
<feature type="chain" id="PRO_1000058918" description="Adenylate kinase">
    <location>
        <begin position="1"/>
        <end position="212"/>
    </location>
</feature>
<feature type="region of interest" description="NMP" evidence="1">
    <location>
        <begin position="30"/>
        <end position="59"/>
    </location>
</feature>
<feature type="region of interest" description="LID" evidence="1">
    <location>
        <begin position="127"/>
        <end position="159"/>
    </location>
</feature>
<feature type="binding site" evidence="1">
    <location>
        <begin position="10"/>
        <end position="15"/>
    </location>
    <ligand>
        <name>ATP</name>
        <dbReference type="ChEBI" id="CHEBI:30616"/>
    </ligand>
</feature>
<feature type="binding site" evidence="1">
    <location>
        <position position="31"/>
    </location>
    <ligand>
        <name>AMP</name>
        <dbReference type="ChEBI" id="CHEBI:456215"/>
    </ligand>
</feature>
<feature type="binding site" evidence="1">
    <location>
        <position position="36"/>
    </location>
    <ligand>
        <name>AMP</name>
        <dbReference type="ChEBI" id="CHEBI:456215"/>
    </ligand>
</feature>
<feature type="binding site" evidence="1">
    <location>
        <begin position="57"/>
        <end position="59"/>
    </location>
    <ligand>
        <name>AMP</name>
        <dbReference type="ChEBI" id="CHEBI:456215"/>
    </ligand>
</feature>
<feature type="binding site" evidence="1">
    <location>
        <begin position="86"/>
        <end position="89"/>
    </location>
    <ligand>
        <name>AMP</name>
        <dbReference type="ChEBI" id="CHEBI:456215"/>
    </ligand>
</feature>
<feature type="binding site" evidence="1">
    <location>
        <position position="93"/>
    </location>
    <ligand>
        <name>AMP</name>
        <dbReference type="ChEBI" id="CHEBI:456215"/>
    </ligand>
</feature>
<feature type="binding site" evidence="1">
    <location>
        <position position="128"/>
    </location>
    <ligand>
        <name>ATP</name>
        <dbReference type="ChEBI" id="CHEBI:30616"/>
    </ligand>
</feature>
<feature type="binding site" evidence="1">
    <location>
        <begin position="137"/>
        <end position="138"/>
    </location>
    <ligand>
        <name>ATP</name>
        <dbReference type="ChEBI" id="CHEBI:30616"/>
    </ligand>
</feature>
<feature type="binding site" evidence="1">
    <location>
        <position position="156"/>
    </location>
    <ligand>
        <name>AMP</name>
        <dbReference type="ChEBI" id="CHEBI:456215"/>
    </ligand>
</feature>
<feature type="binding site" evidence="1">
    <location>
        <position position="167"/>
    </location>
    <ligand>
        <name>AMP</name>
        <dbReference type="ChEBI" id="CHEBI:456215"/>
    </ligand>
</feature>
<feature type="binding site" evidence="1">
    <location>
        <position position="195"/>
    </location>
    <ligand>
        <name>ATP</name>
        <dbReference type="ChEBI" id="CHEBI:30616"/>
    </ligand>
</feature>
<sequence>MNLLIIGLPGAGKGTQAAKIVEEFGVAHISTGDMFRAAMANQTEMGRLAKSYIDKGELVPDEVTNGIVKERLAEDDIAEKGFLLDGYPRTIEQAHALDATLEELGLRLDGVINIKVDPSCLVERLSGRIINRKTGETFHKVFNPPVDYKEEDYYQREDDKPETVKRRLDVNMAQGEPILEHYRKLGLVTDIEGNQEITDVFADVEKALLELK</sequence>
<gene>
    <name evidence="1" type="primary">adk</name>
    <name type="ordered locus">M28_Spy0064</name>
</gene>